<accession>P34772</accession>
<proteinExistence type="inferred from homology"/>
<sequence>MSRSSKKSPFISYRLFNTIDKMNLKNLKQLVFTKSRSSTVFPSMVGHNISVYNGKNYVPFLILNQMISSKLGEFSRTRNFRGHKGINKKLIKKSSKKVTKNKKSIKKNIKTTSKKFKK</sequence>
<comment type="function">
    <text evidence="1">Protein S19 forms a complex with S13 that binds strongly to the 16S ribosomal RNA.</text>
</comment>
<comment type="subcellular location">
    <subcellularLocation>
        <location>Plastid</location>
    </subcellularLocation>
</comment>
<comment type="similarity">
    <text evidence="3">Belongs to the universal ribosomal protein uS19 family.</text>
</comment>
<protein>
    <recommendedName>
        <fullName evidence="3">Small ribosomal subunit protein uS19c</fullName>
    </recommendedName>
    <alternativeName>
        <fullName>Plastid 30S ribosomal protein S19</fullName>
    </alternativeName>
</protein>
<geneLocation type="non-photosynthetic plastid"/>
<gene>
    <name type="primary">rps19</name>
</gene>
<evidence type="ECO:0000250" key="1"/>
<evidence type="ECO:0000256" key="2">
    <source>
        <dbReference type="SAM" id="MobiDB-lite"/>
    </source>
</evidence>
<evidence type="ECO:0000305" key="3"/>
<reference key="1">
    <citation type="journal article" date="1994" name="Plant Physiol.">
        <title>Plastid ribosomal protein genes from the nonphotosynthetic flagellate Astasia longa.</title>
        <authorList>
            <person name="Gockel G."/>
            <person name="Baier S."/>
            <person name="Hachtel W."/>
        </authorList>
    </citation>
    <scope>NUCLEOTIDE SEQUENCE [GENOMIC DNA]</scope>
    <source>
        <strain>CCAP 1204-17a</strain>
    </source>
</reference>
<reference key="2">
    <citation type="journal article" date="2000" name="Protist">
        <title>Complete gene map of the plastid genome of the nonphotosynthetic euglenoid flagellate Astasia longa.</title>
        <authorList>
            <person name="Gockel G."/>
            <person name="Hachtel W."/>
        </authorList>
    </citation>
    <scope>NUCLEOTIDE SEQUENCE [LARGE SCALE GENOMIC DNA]</scope>
    <source>
        <strain>CCAP 1204-17a</strain>
    </source>
</reference>
<name>RR19_EUGLO</name>
<keyword id="KW-0934">Plastid</keyword>
<keyword id="KW-0687">Ribonucleoprotein</keyword>
<keyword id="KW-0689">Ribosomal protein</keyword>
<keyword id="KW-0694">RNA-binding</keyword>
<keyword id="KW-0699">rRNA-binding</keyword>
<organism>
    <name type="scientific">Euglena longa</name>
    <name type="common">Euglenophycean alga</name>
    <name type="synonym">Astasia longa</name>
    <dbReference type="NCBI Taxonomy" id="3037"/>
    <lineage>
        <taxon>Eukaryota</taxon>
        <taxon>Discoba</taxon>
        <taxon>Euglenozoa</taxon>
        <taxon>Euglenida</taxon>
        <taxon>Spirocuta</taxon>
        <taxon>Euglenophyceae</taxon>
        <taxon>Euglenales</taxon>
        <taxon>Euglenaceae</taxon>
        <taxon>Euglena</taxon>
    </lineage>
</organism>
<feature type="chain" id="PRO_0000129954" description="Small ribosomal subunit protein uS19c">
    <location>
        <begin position="1"/>
        <end position="118"/>
    </location>
</feature>
<feature type="region of interest" description="Disordered" evidence="2">
    <location>
        <begin position="92"/>
        <end position="118"/>
    </location>
</feature>
<dbReference type="EMBL" id="AJ294725">
    <property type="protein sequence ID" value="CAC24597.1"/>
    <property type="molecule type" value="Genomic_DNA"/>
</dbReference>
<dbReference type="PIR" id="S38608">
    <property type="entry name" value="S38608"/>
</dbReference>
<dbReference type="RefSeq" id="NP_074986.1">
    <property type="nucleotide sequence ID" value="NC_002652.1"/>
</dbReference>
<dbReference type="SMR" id="P34772"/>
<dbReference type="GeneID" id="802542"/>
<dbReference type="GO" id="GO:0009536">
    <property type="term" value="C:plastid"/>
    <property type="evidence" value="ECO:0007669"/>
    <property type="project" value="UniProtKB-SubCell"/>
</dbReference>
<dbReference type="GO" id="GO:0015935">
    <property type="term" value="C:small ribosomal subunit"/>
    <property type="evidence" value="ECO:0007669"/>
    <property type="project" value="InterPro"/>
</dbReference>
<dbReference type="GO" id="GO:0019843">
    <property type="term" value="F:rRNA binding"/>
    <property type="evidence" value="ECO:0007669"/>
    <property type="project" value="UniProtKB-KW"/>
</dbReference>
<dbReference type="GO" id="GO:0003735">
    <property type="term" value="F:structural constituent of ribosome"/>
    <property type="evidence" value="ECO:0007669"/>
    <property type="project" value="InterPro"/>
</dbReference>
<dbReference type="GO" id="GO:0000028">
    <property type="term" value="P:ribosomal small subunit assembly"/>
    <property type="evidence" value="ECO:0007669"/>
    <property type="project" value="TreeGrafter"/>
</dbReference>
<dbReference type="GO" id="GO:0006412">
    <property type="term" value="P:translation"/>
    <property type="evidence" value="ECO:0007669"/>
    <property type="project" value="InterPro"/>
</dbReference>
<dbReference type="FunFam" id="3.30.860.10:FF:000001">
    <property type="entry name" value="30S ribosomal protein S19"/>
    <property type="match status" value="1"/>
</dbReference>
<dbReference type="Gene3D" id="3.30.860.10">
    <property type="entry name" value="30s Ribosomal Protein S19, Chain A"/>
    <property type="match status" value="1"/>
</dbReference>
<dbReference type="HAMAP" id="MF_00531">
    <property type="entry name" value="Ribosomal_uS19"/>
    <property type="match status" value="1"/>
</dbReference>
<dbReference type="InterPro" id="IPR002222">
    <property type="entry name" value="Ribosomal_uS19"/>
</dbReference>
<dbReference type="InterPro" id="IPR005732">
    <property type="entry name" value="Ribosomal_uS19_bac-type"/>
</dbReference>
<dbReference type="InterPro" id="IPR020934">
    <property type="entry name" value="Ribosomal_uS19_CS"/>
</dbReference>
<dbReference type="InterPro" id="IPR023575">
    <property type="entry name" value="Ribosomal_uS19_SF"/>
</dbReference>
<dbReference type="NCBIfam" id="TIGR01050">
    <property type="entry name" value="rpsS_bact"/>
    <property type="match status" value="1"/>
</dbReference>
<dbReference type="PANTHER" id="PTHR11880">
    <property type="entry name" value="RIBOSOMAL PROTEIN S19P FAMILY MEMBER"/>
    <property type="match status" value="1"/>
</dbReference>
<dbReference type="PANTHER" id="PTHR11880:SF8">
    <property type="entry name" value="SMALL RIBOSOMAL SUBUNIT PROTEIN US19M"/>
    <property type="match status" value="1"/>
</dbReference>
<dbReference type="Pfam" id="PF00203">
    <property type="entry name" value="Ribosomal_S19"/>
    <property type="match status" value="1"/>
</dbReference>
<dbReference type="PIRSF" id="PIRSF002144">
    <property type="entry name" value="Ribosomal_S19"/>
    <property type="match status" value="1"/>
</dbReference>
<dbReference type="PRINTS" id="PR00975">
    <property type="entry name" value="RIBOSOMALS19"/>
</dbReference>
<dbReference type="SUPFAM" id="SSF54570">
    <property type="entry name" value="Ribosomal protein S19"/>
    <property type="match status" value="1"/>
</dbReference>
<dbReference type="PROSITE" id="PS00323">
    <property type="entry name" value="RIBOSOMAL_S19"/>
    <property type="match status" value="1"/>
</dbReference>